<gene>
    <name type="primary">OPG190</name>
    <name type="synonym">PS/HR</name>
    <name type="ORF">B5R</name>
</gene>
<sequence length="317" mass="35130">MKTISVVTLLCVLPAVVYSTCTVPTMNNAKLTSTETSFNDKQKVTFTCDQGYHSLDPNAVCETDKWKYENPCKKMCTVSDYVSELYDKPLYEVNSTMTLSCNGETKYFRCEEKNGNTSWNDTVTCPNAECQPLQLEHGSCQPVKEKYSFGEYMTINCDVGYEVIGASYISCTANSWNVIPSCQQKCDMPSLSNGLISGSTFSIGGVIHLSCKSGFTLTGSPSSTCIDGKWNPILPTCVRSNEKFDPVDDGPDDETDLSKLSKDVVQYEQEIESLEATYHIIIVALTIMGVIFLISVIVLVCSCDKNNDQYKFHKLLP</sequence>
<evidence type="ECO:0000250" key="1">
    <source>
        <dbReference type="UniProtKB" id="Q01227"/>
    </source>
</evidence>
<evidence type="ECO:0000255" key="2"/>
<evidence type="ECO:0000255" key="3">
    <source>
        <dbReference type="PROSITE-ProRule" id="PRU00302"/>
    </source>
</evidence>
<evidence type="ECO:0000305" key="4"/>
<proteinExistence type="evidence at transcript level"/>
<organism>
    <name type="scientific">Vaccinia virus (strain LC16m0)</name>
    <name type="common">VACV</name>
    <dbReference type="NCBI Taxonomy" id="10246"/>
    <lineage>
        <taxon>Viruses</taxon>
        <taxon>Varidnaviria</taxon>
        <taxon>Bamfordvirae</taxon>
        <taxon>Nucleocytoviricota</taxon>
        <taxon>Pokkesviricetes</taxon>
        <taxon>Chitovirales</taxon>
        <taxon>Poxviridae</taxon>
        <taxon>Chordopoxvirinae</taxon>
        <taxon>Orthopoxvirus</taxon>
        <taxon>Vaccinia virus</taxon>
    </lineage>
</organism>
<reference key="1">
    <citation type="journal article" date="1991" name="Virology">
        <title>Regulation of plaque size and host range by a vaccinia virus gene related to complement system proteins.</title>
        <authorList>
            <person name="Takahashi-Nishimaki F."/>
            <person name="Funahashi S."/>
            <person name="Miki K."/>
            <person name="Hashizume S."/>
            <person name="Sugimoto M."/>
        </authorList>
    </citation>
    <scope>NUCLEOTIDE SEQUENCE [GENOMIC DNA]</scope>
</reference>
<accession>P24084</accession>
<organismHost>
    <name type="scientific">Homo sapiens</name>
    <name type="common">Human</name>
    <dbReference type="NCBI Taxonomy" id="9606"/>
</organismHost>
<protein>
    <recommendedName>
        <fullName>Protein OPG190</fullName>
    </recommendedName>
    <alternativeName>
        <fullName>Plaque-size/host range protein</fullName>
    </alternativeName>
</protein>
<feature type="signal peptide" evidence="2">
    <location>
        <begin position="1"/>
        <end position="17"/>
    </location>
</feature>
<feature type="chain" id="PRO_0000006021" description="Protein OPG190">
    <location>
        <begin position="18"/>
        <end position="317"/>
    </location>
</feature>
<feature type="transmembrane region" description="Helical" evidence="2">
    <location>
        <begin position="280"/>
        <end position="300"/>
    </location>
</feature>
<feature type="domain" description="Sushi 1" evidence="3">
    <location>
        <begin position="19"/>
        <end position="74"/>
    </location>
</feature>
<feature type="domain" description="Sushi 2" evidence="3">
    <location>
        <begin position="75"/>
        <end position="126"/>
    </location>
</feature>
<feature type="domain" description="Sushi 3" evidence="3">
    <location>
        <begin position="127"/>
        <end position="184"/>
    </location>
</feature>
<feature type="domain" description="Sushi 4" evidence="3">
    <location>
        <begin position="185"/>
        <end position="239"/>
    </location>
</feature>
<feature type="lipid moiety-binding region" description="S-palmitoyl cysteine; by host" evidence="1">
    <location>
        <position position="301"/>
    </location>
</feature>
<feature type="lipid moiety-binding region" description="S-palmitoyl cysteine; by host" evidence="1">
    <location>
        <position position="303"/>
    </location>
</feature>
<feature type="disulfide bond" evidence="3">
    <location>
        <begin position="21"/>
        <end position="61"/>
    </location>
</feature>
<feature type="disulfide bond" evidence="3">
    <location>
        <begin position="48"/>
        <end position="72"/>
    </location>
</feature>
<feature type="disulfide bond" evidence="3">
    <location>
        <begin position="76"/>
        <end position="110"/>
    </location>
</feature>
<feature type="disulfide bond" evidence="3">
    <location>
        <begin position="101"/>
        <end position="125"/>
    </location>
</feature>
<feature type="disulfide bond" evidence="3">
    <location>
        <begin position="130"/>
        <end position="171"/>
    </location>
</feature>
<feature type="disulfide bond" evidence="3">
    <location>
        <begin position="157"/>
        <end position="182"/>
    </location>
</feature>
<feature type="disulfide bond" evidence="3">
    <location>
        <begin position="186"/>
        <end position="225"/>
    </location>
</feature>
<feature type="disulfide bond" evidence="3">
    <location>
        <begin position="211"/>
        <end position="237"/>
    </location>
</feature>
<name>PG190_VACC0</name>
<comment type="function">
    <text evidence="1">Plays a role in the dissolution of the outermost membrane of extracellular enveloped virions (EV) to allow virion entry into host cells. Also participates in wrapping mature virions (MV) to form enveloped virions (EV).</text>
</comment>
<comment type="subunit">
    <text evidence="1">Interacts with OPG161; this interaction is required for efficient targeting of OPG161 and OPG190 into enveloped virions. Interacts with OPG162; this interaction is required for the correct glycosylation, trafficking and stability of OPG162 and OPG190 incorporation into extracellular enveloped virions. Interacts with envelope phospholipase OPG057.</text>
</comment>
<comment type="subcellular location">
    <subcellularLocation>
        <location evidence="1">Virion membrane</location>
        <topology evidence="1">Single-pass type I membrane protein</topology>
    </subcellularLocation>
    <subcellularLocation>
        <location evidence="1">Host Golgi apparatus</location>
        <location evidence="1">Host trans-Golgi network</location>
    </subcellularLocation>
    <text evidence="1">OPG190 is found on enveloped virion (EV) membranes.</text>
</comment>
<comment type="induction">
    <text>Expressed in the early phase of the viral replicative cycle.</text>
</comment>
<comment type="miscellaneous">
    <text>The large-plaque-forming LC16m0 strain can actively proliferate in vero (YTV) cells.</text>
</comment>
<comment type="similarity">
    <text evidence="4">Belongs to the receptors of complement activation (RCA) family.</text>
</comment>
<dbReference type="EMBL" id="M55434">
    <property type="protein sequence ID" value="AAA48316.1"/>
    <property type="molecule type" value="Genomic_DNA"/>
</dbReference>
<dbReference type="SMR" id="P24084"/>
<dbReference type="GO" id="GO:0044177">
    <property type="term" value="C:host cell Golgi apparatus"/>
    <property type="evidence" value="ECO:0007669"/>
    <property type="project" value="UniProtKB-SubCell"/>
</dbReference>
<dbReference type="GO" id="GO:0016020">
    <property type="term" value="C:membrane"/>
    <property type="evidence" value="ECO:0007669"/>
    <property type="project" value="UniProtKB-KW"/>
</dbReference>
<dbReference type="GO" id="GO:0055036">
    <property type="term" value="C:virion membrane"/>
    <property type="evidence" value="ECO:0007669"/>
    <property type="project" value="UniProtKB-SubCell"/>
</dbReference>
<dbReference type="GO" id="GO:0001848">
    <property type="term" value="F:complement binding"/>
    <property type="evidence" value="ECO:0007669"/>
    <property type="project" value="InterPro"/>
</dbReference>
<dbReference type="GO" id="GO:0045916">
    <property type="term" value="P:negative regulation of complement activation"/>
    <property type="evidence" value="ECO:0007669"/>
    <property type="project" value="InterPro"/>
</dbReference>
<dbReference type="CDD" id="cd00033">
    <property type="entry name" value="CCP"/>
    <property type="match status" value="2"/>
</dbReference>
<dbReference type="Gene3D" id="2.10.70.10">
    <property type="entry name" value="Complement Module, domain 1"/>
    <property type="match status" value="3"/>
</dbReference>
<dbReference type="InterPro" id="IPR011176">
    <property type="entry name" value="CCP_VACV_C3/B5"/>
</dbReference>
<dbReference type="InterPro" id="IPR051503">
    <property type="entry name" value="ComplSys_Reg/VirEntry_Med"/>
</dbReference>
<dbReference type="InterPro" id="IPR035976">
    <property type="entry name" value="Sushi/SCR/CCP_sf"/>
</dbReference>
<dbReference type="InterPro" id="IPR000436">
    <property type="entry name" value="Sushi_SCR_CCP_dom"/>
</dbReference>
<dbReference type="PANTHER" id="PTHR45785">
    <property type="entry name" value="COMPLEMENT FACTOR H-RELATED"/>
    <property type="match status" value="1"/>
</dbReference>
<dbReference type="PANTHER" id="PTHR45785:SF2">
    <property type="entry name" value="COMPLEMENT FACTOR H-RELATED"/>
    <property type="match status" value="1"/>
</dbReference>
<dbReference type="Pfam" id="PF00084">
    <property type="entry name" value="Sushi"/>
    <property type="match status" value="3"/>
</dbReference>
<dbReference type="PIRSF" id="PIRSF002486">
    <property type="entry name" value="CIP_VAC_C3L"/>
    <property type="match status" value="1"/>
</dbReference>
<dbReference type="SMART" id="SM00032">
    <property type="entry name" value="CCP"/>
    <property type="match status" value="3"/>
</dbReference>
<dbReference type="SUPFAM" id="SSF57535">
    <property type="entry name" value="Complement control module/SCR domain"/>
    <property type="match status" value="3"/>
</dbReference>
<dbReference type="PROSITE" id="PS50923">
    <property type="entry name" value="SUSHI"/>
    <property type="match status" value="3"/>
</dbReference>
<keyword id="KW-1015">Disulfide bond</keyword>
<keyword id="KW-0244">Early protein</keyword>
<keyword id="KW-1040">Host Golgi apparatus</keyword>
<keyword id="KW-0449">Lipoprotein</keyword>
<keyword id="KW-0472">Membrane</keyword>
<keyword id="KW-0564">Palmitate</keyword>
<keyword id="KW-0677">Repeat</keyword>
<keyword id="KW-0732">Signal</keyword>
<keyword id="KW-0768">Sushi</keyword>
<keyword id="KW-0812">Transmembrane</keyword>
<keyword id="KW-1133">Transmembrane helix</keyword>
<keyword id="KW-0946">Virion</keyword>